<organism>
    <name type="scientific">Natranaerobius thermophilus (strain ATCC BAA-1301 / DSM 18059 / JW/NM-WN-LF)</name>
    <dbReference type="NCBI Taxonomy" id="457570"/>
    <lineage>
        <taxon>Bacteria</taxon>
        <taxon>Bacillati</taxon>
        <taxon>Bacillota</taxon>
        <taxon>Clostridia</taxon>
        <taxon>Natranaerobiales</taxon>
        <taxon>Natranaerobiaceae</taxon>
        <taxon>Natranaerobius</taxon>
    </lineage>
</organism>
<reference key="1">
    <citation type="submission" date="2008-04" db="EMBL/GenBank/DDBJ databases">
        <title>Complete sequence of chromosome of Natranaerobius thermophilus JW/NM-WN-LF.</title>
        <authorList>
            <consortium name="US DOE Joint Genome Institute"/>
            <person name="Copeland A."/>
            <person name="Lucas S."/>
            <person name="Lapidus A."/>
            <person name="Glavina del Rio T."/>
            <person name="Dalin E."/>
            <person name="Tice H."/>
            <person name="Bruce D."/>
            <person name="Goodwin L."/>
            <person name="Pitluck S."/>
            <person name="Chertkov O."/>
            <person name="Brettin T."/>
            <person name="Detter J.C."/>
            <person name="Han C."/>
            <person name="Kuske C.R."/>
            <person name="Schmutz J."/>
            <person name="Larimer F."/>
            <person name="Land M."/>
            <person name="Hauser L."/>
            <person name="Kyrpides N."/>
            <person name="Lykidis A."/>
            <person name="Mesbah N.M."/>
            <person name="Wiegel J."/>
        </authorList>
    </citation>
    <scope>NUCLEOTIDE SEQUENCE [LARGE SCALE GENOMIC DNA]</scope>
    <source>
        <strain>ATCC BAA-1301 / DSM 18059 / JW/NM-WN-LF</strain>
    </source>
</reference>
<proteinExistence type="inferred from homology"/>
<gene>
    <name evidence="1" type="primary">rplB</name>
    <name type="ordered locus">Nther_0197</name>
</gene>
<protein>
    <recommendedName>
        <fullName evidence="1">Large ribosomal subunit protein uL2</fullName>
    </recommendedName>
    <alternativeName>
        <fullName evidence="3">50S ribosomal protein L2</fullName>
    </alternativeName>
</protein>
<dbReference type="EMBL" id="CP001034">
    <property type="protein sequence ID" value="ACB83796.1"/>
    <property type="status" value="ALT_INIT"/>
    <property type="molecule type" value="Genomic_DNA"/>
</dbReference>
<dbReference type="RefSeq" id="WP_041366783.1">
    <property type="nucleotide sequence ID" value="NC_010718.1"/>
</dbReference>
<dbReference type="SMR" id="B2A4E2"/>
<dbReference type="FunCoup" id="B2A4E2">
    <property type="interactions" value="404"/>
</dbReference>
<dbReference type="STRING" id="457570.Nther_0197"/>
<dbReference type="KEGG" id="nth:Nther_0197"/>
<dbReference type="eggNOG" id="COG0090">
    <property type="taxonomic scope" value="Bacteria"/>
</dbReference>
<dbReference type="HOGENOM" id="CLU_036235_2_1_9"/>
<dbReference type="InParanoid" id="B2A4E2"/>
<dbReference type="OrthoDB" id="9778722at2"/>
<dbReference type="Proteomes" id="UP000001683">
    <property type="component" value="Chromosome"/>
</dbReference>
<dbReference type="GO" id="GO:0015934">
    <property type="term" value="C:large ribosomal subunit"/>
    <property type="evidence" value="ECO:0007669"/>
    <property type="project" value="InterPro"/>
</dbReference>
<dbReference type="GO" id="GO:0019843">
    <property type="term" value="F:rRNA binding"/>
    <property type="evidence" value="ECO:0007669"/>
    <property type="project" value="UniProtKB-UniRule"/>
</dbReference>
<dbReference type="GO" id="GO:0003735">
    <property type="term" value="F:structural constituent of ribosome"/>
    <property type="evidence" value="ECO:0007669"/>
    <property type="project" value="InterPro"/>
</dbReference>
<dbReference type="GO" id="GO:0016740">
    <property type="term" value="F:transferase activity"/>
    <property type="evidence" value="ECO:0007669"/>
    <property type="project" value="InterPro"/>
</dbReference>
<dbReference type="GO" id="GO:0002181">
    <property type="term" value="P:cytoplasmic translation"/>
    <property type="evidence" value="ECO:0007669"/>
    <property type="project" value="TreeGrafter"/>
</dbReference>
<dbReference type="FunFam" id="2.30.30.30:FF:000001">
    <property type="entry name" value="50S ribosomal protein L2"/>
    <property type="match status" value="1"/>
</dbReference>
<dbReference type="FunFam" id="2.40.50.140:FF:000003">
    <property type="entry name" value="50S ribosomal protein L2"/>
    <property type="match status" value="1"/>
</dbReference>
<dbReference type="FunFam" id="4.10.950.10:FF:000001">
    <property type="entry name" value="50S ribosomal protein L2"/>
    <property type="match status" value="1"/>
</dbReference>
<dbReference type="Gene3D" id="2.30.30.30">
    <property type="match status" value="1"/>
</dbReference>
<dbReference type="Gene3D" id="2.40.50.140">
    <property type="entry name" value="Nucleic acid-binding proteins"/>
    <property type="match status" value="1"/>
</dbReference>
<dbReference type="Gene3D" id="4.10.950.10">
    <property type="entry name" value="Ribosomal protein L2, domain 3"/>
    <property type="match status" value="1"/>
</dbReference>
<dbReference type="HAMAP" id="MF_01320_B">
    <property type="entry name" value="Ribosomal_uL2_B"/>
    <property type="match status" value="1"/>
</dbReference>
<dbReference type="InterPro" id="IPR012340">
    <property type="entry name" value="NA-bd_OB-fold"/>
</dbReference>
<dbReference type="InterPro" id="IPR014722">
    <property type="entry name" value="Rib_uL2_dom2"/>
</dbReference>
<dbReference type="InterPro" id="IPR002171">
    <property type="entry name" value="Ribosomal_uL2"/>
</dbReference>
<dbReference type="InterPro" id="IPR005880">
    <property type="entry name" value="Ribosomal_uL2_bac/org-type"/>
</dbReference>
<dbReference type="InterPro" id="IPR022669">
    <property type="entry name" value="Ribosomal_uL2_C"/>
</dbReference>
<dbReference type="InterPro" id="IPR022671">
    <property type="entry name" value="Ribosomal_uL2_CS"/>
</dbReference>
<dbReference type="InterPro" id="IPR014726">
    <property type="entry name" value="Ribosomal_uL2_dom3"/>
</dbReference>
<dbReference type="InterPro" id="IPR022666">
    <property type="entry name" value="Ribosomal_uL2_RNA-bd_dom"/>
</dbReference>
<dbReference type="InterPro" id="IPR008991">
    <property type="entry name" value="Translation_prot_SH3-like_sf"/>
</dbReference>
<dbReference type="NCBIfam" id="TIGR01171">
    <property type="entry name" value="rplB_bact"/>
    <property type="match status" value="1"/>
</dbReference>
<dbReference type="PANTHER" id="PTHR13691:SF5">
    <property type="entry name" value="LARGE RIBOSOMAL SUBUNIT PROTEIN UL2M"/>
    <property type="match status" value="1"/>
</dbReference>
<dbReference type="PANTHER" id="PTHR13691">
    <property type="entry name" value="RIBOSOMAL PROTEIN L2"/>
    <property type="match status" value="1"/>
</dbReference>
<dbReference type="Pfam" id="PF00181">
    <property type="entry name" value="Ribosomal_L2"/>
    <property type="match status" value="1"/>
</dbReference>
<dbReference type="Pfam" id="PF03947">
    <property type="entry name" value="Ribosomal_L2_C"/>
    <property type="match status" value="1"/>
</dbReference>
<dbReference type="PIRSF" id="PIRSF002158">
    <property type="entry name" value="Ribosomal_L2"/>
    <property type="match status" value="1"/>
</dbReference>
<dbReference type="SMART" id="SM01383">
    <property type="entry name" value="Ribosomal_L2"/>
    <property type="match status" value="1"/>
</dbReference>
<dbReference type="SMART" id="SM01382">
    <property type="entry name" value="Ribosomal_L2_C"/>
    <property type="match status" value="1"/>
</dbReference>
<dbReference type="SUPFAM" id="SSF50249">
    <property type="entry name" value="Nucleic acid-binding proteins"/>
    <property type="match status" value="1"/>
</dbReference>
<dbReference type="SUPFAM" id="SSF50104">
    <property type="entry name" value="Translation proteins SH3-like domain"/>
    <property type="match status" value="1"/>
</dbReference>
<dbReference type="PROSITE" id="PS00467">
    <property type="entry name" value="RIBOSOMAL_L2"/>
    <property type="match status" value="1"/>
</dbReference>
<evidence type="ECO:0000255" key="1">
    <source>
        <dbReference type="HAMAP-Rule" id="MF_01320"/>
    </source>
</evidence>
<evidence type="ECO:0000256" key="2">
    <source>
        <dbReference type="SAM" id="MobiDB-lite"/>
    </source>
</evidence>
<evidence type="ECO:0000305" key="3"/>
<keyword id="KW-1185">Reference proteome</keyword>
<keyword id="KW-0687">Ribonucleoprotein</keyword>
<keyword id="KW-0689">Ribosomal protein</keyword>
<keyword id="KW-0694">RNA-binding</keyword>
<keyword id="KW-0699">rRNA-binding</keyword>
<name>RL2_NATTJ</name>
<sequence length="276" mass="30812">MSIKKFKPTSPGKRYMTVASKEEITREEPEKSLLAPLKNKSGRNNQGRISTRRQGGRHKRKYRIIDWKRDKDGVPAKVASIEYDPNRTAYIALLNYVDGEKRYILAPLGIKPGDKIESGSKAEIRPGNALPIRNIPVGTIVHNVELKPEKGGQLARSAGTYCQIVAKEGKYAHVKLPSEEVRMIHLDCRATVGQVGNVEHENIDLGKAGRARWQGKRPSVRGVAMNAVDHPHGGGEGKAFVGRKTQYTPWGQKSAGYKTRRKAKKSDKYIVKKRNQ</sequence>
<comment type="function">
    <text evidence="1">One of the primary rRNA binding proteins. Required for association of the 30S and 50S subunits to form the 70S ribosome, for tRNA binding and peptide bond formation. It has been suggested to have peptidyltransferase activity; this is somewhat controversial. Makes several contacts with the 16S rRNA in the 70S ribosome.</text>
</comment>
<comment type="subunit">
    <text evidence="1">Part of the 50S ribosomal subunit. Forms a bridge to the 30S subunit in the 70S ribosome.</text>
</comment>
<comment type="similarity">
    <text evidence="1">Belongs to the universal ribosomal protein uL2 family.</text>
</comment>
<comment type="sequence caution" evidence="3">
    <conflict type="erroneous initiation">
        <sequence resource="EMBL-CDS" id="ACB83796"/>
    </conflict>
</comment>
<accession>B2A4E2</accession>
<feature type="chain" id="PRO_0000342533" description="Large ribosomal subunit protein uL2">
    <location>
        <begin position="1"/>
        <end position="276"/>
    </location>
</feature>
<feature type="region of interest" description="Disordered" evidence="2">
    <location>
        <begin position="1"/>
        <end position="60"/>
    </location>
</feature>
<feature type="region of interest" description="Disordered" evidence="2">
    <location>
        <begin position="226"/>
        <end position="276"/>
    </location>
</feature>
<feature type="compositionally biased region" description="Basic and acidic residues" evidence="2">
    <location>
        <begin position="20"/>
        <end position="31"/>
    </location>
</feature>
<feature type="compositionally biased region" description="Basic residues" evidence="2">
    <location>
        <begin position="50"/>
        <end position="60"/>
    </location>
</feature>
<feature type="compositionally biased region" description="Basic residues" evidence="2">
    <location>
        <begin position="258"/>
        <end position="276"/>
    </location>
</feature>